<dbReference type="EC" id="2.7.7.3" evidence="1"/>
<dbReference type="EMBL" id="AM180252">
    <property type="protein sequence ID" value="CAJ54338.1"/>
    <property type="molecule type" value="Genomic_DNA"/>
</dbReference>
<dbReference type="RefSeq" id="WP_011526367.1">
    <property type="nucleotide sequence ID" value="NC_008011.1"/>
</dbReference>
<dbReference type="SMR" id="Q1MRN8"/>
<dbReference type="STRING" id="363253.LI0282"/>
<dbReference type="KEGG" id="lip:LI0282"/>
<dbReference type="eggNOG" id="COG0669">
    <property type="taxonomic scope" value="Bacteria"/>
</dbReference>
<dbReference type="HOGENOM" id="CLU_100149_0_1_7"/>
<dbReference type="OrthoDB" id="9806661at2"/>
<dbReference type="UniPathway" id="UPA00241">
    <property type="reaction ID" value="UER00355"/>
</dbReference>
<dbReference type="Proteomes" id="UP000002430">
    <property type="component" value="Chromosome"/>
</dbReference>
<dbReference type="GO" id="GO:0005737">
    <property type="term" value="C:cytoplasm"/>
    <property type="evidence" value="ECO:0007669"/>
    <property type="project" value="UniProtKB-SubCell"/>
</dbReference>
<dbReference type="GO" id="GO:0005524">
    <property type="term" value="F:ATP binding"/>
    <property type="evidence" value="ECO:0007669"/>
    <property type="project" value="UniProtKB-KW"/>
</dbReference>
<dbReference type="GO" id="GO:0004595">
    <property type="term" value="F:pantetheine-phosphate adenylyltransferase activity"/>
    <property type="evidence" value="ECO:0007669"/>
    <property type="project" value="UniProtKB-UniRule"/>
</dbReference>
<dbReference type="GO" id="GO:0015937">
    <property type="term" value="P:coenzyme A biosynthetic process"/>
    <property type="evidence" value="ECO:0007669"/>
    <property type="project" value="UniProtKB-UniRule"/>
</dbReference>
<dbReference type="CDD" id="cd02163">
    <property type="entry name" value="PPAT"/>
    <property type="match status" value="1"/>
</dbReference>
<dbReference type="Gene3D" id="3.40.50.620">
    <property type="entry name" value="HUPs"/>
    <property type="match status" value="1"/>
</dbReference>
<dbReference type="HAMAP" id="MF_00151">
    <property type="entry name" value="PPAT_bact"/>
    <property type="match status" value="1"/>
</dbReference>
<dbReference type="InterPro" id="IPR004821">
    <property type="entry name" value="Cyt_trans-like"/>
</dbReference>
<dbReference type="InterPro" id="IPR001980">
    <property type="entry name" value="PPAT"/>
</dbReference>
<dbReference type="InterPro" id="IPR014729">
    <property type="entry name" value="Rossmann-like_a/b/a_fold"/>
</dbReference>
<dbReference type="NCBIfam" id="TIGR01510">
    <property type="entry name" value="coaD_prev_kdtB"/>
    <property type="match status" value="1"/>
</dbReference>
<dbReference type="NCBIfam" id="TIGR00125">
    <property type="entry name" value="cyt_tran_rel"/>
    <property type="match status" value="1"/>
</dbReference>
<dbReference type="PANTHER" id="PTHR21342">
    <property type="entry name" value="PHOSPHOPANTETHEINE ADENYLYLTRANSFERASE"/>
    <property type="match status" value="1"/>
</dbReference>
<dbReference type="PANTHER" id="PTHR21342:SF1">
    <property type="entry name" value="PHOSPHOPANTETHEINE ADENYLYLTRANSFERASE"/>
    <property type="match status" value="1"/>
</dbReference>
<dbReference type="Pfam" id="PF01467">
    <property type="entry name" value="CTP_transf_like"/>
    <property type="match status" value="1"/>
</dbReference>
<dbReference type="PRINTS" id="PR01020">
    <property type="entry name" value="LPSBIOSNTHSS"/>
</dbReference>
<dbReference type="SUPFAM" id="SSF52374">
    <property type="entry name" value="Nucleotidylyl transferase"/>
    <property type="match status" value="1"/>
</dbReference>
<feature type="chain" id="PRO_1000011167" description="Phosphopantetheine adenylyltransferase">
    <location>
        <begin position="1"/>
        <end position="172"/>
    </location>
</feature>
<feature type="binding site" evidence="1">
    <location>
        <begin position="14"/>
        <end position="15"/>
    </location>
    <ligand>
        <name>ATP</name>
        <dbReference type="ChEBI" id="CHEBI:30616"/>
    </ligand>
</feature>
<feature type="binding site" evidence="1">
    <location>
        <position position="14"/>
    </location>
    <ligand>
        <name>substrate</name>
    </ligand>
</feature>
<feature type="binding site" evidence="1">
    <location>
        <position position="22"/>
    </location>
    <ligand>
        <name>ATP</name>
        <dbReference type="ChEBI" id="CHEBI:30616"/>
    </ligand>
</feature>
<feature type="binding site" evidence="1">
    <location>
        <position position="46"/>
    </location>
    <ligand>
        <name>substrate</name>
    </ligand>
</feature>
<feature type="binding site" evidence="1">
    <location>
        <position position="78"/>
    </location>
    <ligand>
        <name>substrate</name>
    </ligand>
</feature>
<feature type="binding site" evidence="1">
    <location>
        <position position="92"/>
    </location>
    <ligand>
        <name>substrate</name>
    </ligand>
</feature>
<feature type="binding site" evidence="1">
    <location>
        <begin position="93"/>
        <end position="95"/>
    </location>
    <ligand>
        <name>ATP</name>
        <dbReference type="ChEBI" id="CHEBI:30616"/>
    </ligand>
</feature>
<feature type="binding site" evidence="1">
    <location>
        <position position="103"/>
    </location>
    <ligand>
        <name>ATP</name>
        <dbReference type="ChEBI" id="CHEBI:30616"/>
    </ligand>
</feature>
<feature type="binding site" evidence="1">
    <location>
        <begin position="128"/>
        <end position="134"/>
    </location>
    <ligand>
        <name>ATP</name>
        <dbReference type="ChEBI" id="CHEBI:30616"/>
    </ligand>
</feature>
<feature type="site" description="Transition state stabilizer" evidence="1">
    <location>
        <position position="22"/>
    </location>
</feature>
<keyword id="KW-0067">ATP-binding</keyword>
<keyword id="KW-0173">Coenzyme A biosynthesis</keyword>
<keyword id="KW-0963">Cytoplasm</keyword>
<keyword id="KW-0460">Magnesium</keyword>
<keyword id="KW-0547">Nucleotide-binding</keyword>
<keyword id="KW-0548">Nucleotidyltransferase</keyword>
<keyword id="KW-1185">Reference proteome</keyword>
<keyword id="KW-0808">Transferase</keyword>
<reference key="1">
    <citation type="submission" date="2005-11" db="EMBL/GenBank/DDBJ databases">
        <title>The complete genome sequence of Lawsonia intracellularis: the causative agent of proliferative enteropathy.</title>
        <authorList>
            <person name="Kaur K."/>
            <person name="Zhang Q."/>
            <person name="Beckler D."/>
            <person name="Munir S."/>
            <person name="Li L."/>
            <person name="Kinsley K."/>
            <person name="Herron L."/>
            <person name="Peterson A."/>
            <person name="May B."/>
            <person name="Singh S."/>
            <person name="Gebhart C."/>
            <person name="Kapur V."/>
        </authorList>
    </citation>
    <scope>NUCLEOTIDE SEQUENCE [LARGE SCALE GENOMIC DNA]</scope>
    <source>
        <strain>PHE/MN1-00</strain>
    </source>
</reference>
<proteinExistence type="inferred from homology"/>
<comment type="function">
    <text evidence="1">Reversibly transfers an adenylyl group from ATP to 4'-phosphopantetheine, yielding dephospho-CoA (dPCoA) and pyrophosphate.</text>
</comment>
<comment type="catalytic activity">
    <reaction evidence="1">
        <text>(R)-4'-phosphopantetheine + ATP + H(+) = 3'-dephospho-CoA + diphosphate</text>
        <dbReference type="Rhea" id="RHEA:19801"/>
        <dbReference type="ChEBI" id="CHEBI:15378"/>
        <dbReference type="ChEBI" id="CHEBI:30616"/>
        <dbReference type="ChEBI" id="CHEBI:33019"/>
        <dbReference type="ChEBI" id="CHEBI:57328"/>
        <dbReference type="ChEBI" id="CHEBI:61723"/>
        <dbReference type="EC" id="2.7.7.3"/>
    </reaction>
</comment>
<comment type="cofactor">
    <cofactor evidence="1">
        <name>Mg(2+)</name>
        <dbReference type="ChEBI" id="CHEBI:18420"/>
    </cofactor>
</comment>
<comment type="pathway">
    <text evidence="1">Cofactor biosynthesis; coenzyme A biosynthesis; CoA from (R)-pantothenate: step 4/5.</text>
</comment>
<comment type="subunit">
    <text evidence="1">Homohexamer.</text>
</comment>
<comment type="subcellular location">
    <subcellularLocation>
        <location evidence="1">Cytoplasm</location>
    </subcellularLocation>
</comment>
<comment type="similarity">
    <text evidence="1">Belongs to the bacterial CoaD family.</text>
</comment>
<organism>
    <name type="scientific">Lawsonia intracellularis (strain PHE/MN1-00)</name>
    <dbReference type="NCBI Taxonomy" id="363253"/>
    <lineage>
        <taxon>Bacteria</taxon>
        <taxon>Pseudomonadati</taxon>
        <taxon>Thermodesulfobacteriota</taxon>
        <taxon>Desulfovibrionia</taxon>
        <taxon>Desulfovibrionales</taxon>
        <taxon>Desulfovibrionaceae</taxon>
        <taxon>Lawsonia</taxon>
    </lineage>
</organism>
<name>COAD_LAWIP</name>
<sequence length="172" mass="19548">MEDTKIRLAIYPGTFDPLTNGHISIIHRAKHLFDKIIIAVAQDSGKKPLFSIEERVSMINTTFFSDHMVDVENFSGLLVDYVEKKNAKTILRGLRAVSDFEYEFQTSLMNRKLCPEIETIFLISDYKWLYISSTVVKTVASLGGDVTDFVPENVLICLKTKYCQSKSNLVIT</sequence>
<gene>
    <name evidence="1" type="primary">coaD</name>
    <name type="ordered locus">LI0282</name>
</gene>
<protein>
    <recommendedName>
        <fullName evidence="1">Phosphopantetheine adenylyltransferase</fullName>
        <ecNumber evidence="1">2.7.7.3</ecNumber>
    </recommendedName>
    <alternativeName>
        <fullName evidence="1">Dephospho-CoA pyrophosphorylase</fullName>
    </alternativeName>
    <alternativeName>
        <fullName evidence="1">Pantetheine-phosphate adenylyltransferase</fullName>
        <shortName evidence="1">PPAT</shortName>
    </alternativeName>
</protein>
<accession>Q1MRN8</accession>
<evidence type="ECO:0000255" key="1">
    <source>
        <dbReference type="HAMAP-Rule" id="MF_00151"/>
    </source>
</evidence>